<name>RPO6_METTH</name>
<comment type="function">
    <text evidence="1">DNA-dependent RNA polymerase (RNAP) catalyzes the transcription of DNA into RNA using the four ribonucleoside triphosphates as substrates.</text>
</comment>
<comment type="catalytic activity">
    <reaction evidence="1">
        <text>RNA(n) + a ribonucleoside 5'-triphosphate = RNA(n+1) + diphosphate</text>
        <dbReference type="Rhea" id="RHEA:21248"/>
        <dbReference type="Rhea" id="RHEA-COMP:14527"/>
        <dbReference type="Rhea" id="RHEA-COMP:17342"/>
        <dbReference type="ChEBI" id="CHEBI:33019"/>
        <dbReference type="ChEBI" id="CHEBI:61557"/>
        <dbReference type="ChEBI" id="CHEBI:140395"/>
        <dbReference type="EC" id="2.7.7.6"/>
    </reaction>
</comment>
<comment type="subunit">
    <text evidence="1">Part of the RNA polymerase complex.</text>
</comment>
<comment type="subcellular location">
    <subcellularLocation>
        <location evidence="1">Cytoplasm</location>
    </subcellularLocation>
</comment>
<comment type="similarity">
    <text evidence="1">Belongs to the archaeal Rpo6/eukaryotic RPB6 RNA polymerase subunit family.</text>
</comment>
<proteinExistence type="inferred from homology"/>
<accession>O26148</accession>
<evidence type="ECO:0000255" key="1">
    <source>
        <dbReference type="HAMAP-Rule" id="MF_00192"/>
    </source>
</evidence>
<evidence type="ECO:0000303" key="2">
    <source>
    </source>
</evidence>
<dbReference type="EC" id="2.7.7.6" evidence="1"/>
<dbReference type="EMBL" id="AE000666">
    <property type="protein sequence ID" value="AAB84549.1"/>
    <property type="molecule type" value="Genomic_DNA"/>
</dbReference>
<dbReference type="PIR" id="F69154">
    <property type="entry name" value="F69154"/>
</dbReference>
<dbReference type="SMR" id="O26148"/>
<dbReference type="STRING" id="187420.MTH_42"/>
<dbReference type="PaxDb" id="187420-MTH_42"/>
<dbReference type="EnsemblBacteria" id="AAB84549">
    <property type="protein sequence ID" value="AAB84549"/>
    <property type="gene ID" value="MTH_42"/>
</dbReference>
<dbReference type="KEGG" id="mth:MTH_42"/>
<dbReference type="PATRIC" id="fig|187420.15.peg.40"/>
<dbReference type="HOGENOM" id="CLU_112527_5_1_2"/>
<dbReference type="InParanoid" id="O26148"/>
<dbReference type="Proteomes" id="UP000005223">
    <property type="component" value="Chromosome"/>
</dbReference>
<dbReference type="GO" id="GO:0005737">
    <property type="term" value="C:cytoplasm"/>
    <property type="evidence" value="ECO:0007669"/>
    <property type="project" value="UniProtKB-SubCell"/>
</dbReference>
<dbReference type="GO" id="GO:0000428">
    <property type="term" value="C:DNA-directed RNA polymerase complex"/>
    <property type="evidence" value="ECO:0007669"/>
    <property type="project" value="UniProtKB-KW"/>
</dbReference>
<dbReference type="GO" id="GO:0003677">
    <property type="term" value="F:DNA binding"/>
    <property type="evidence" value="ECO:0007669"/>
    <property type="project" value="UniProtKB-UniRule"/>
</dbReference>
<dbReference type="GO" id="GO:0003899">
    <property type="term" value="F:DNA-directed RNA polymerase activity"/>
    <property type="evidence" value="ECO:0007669"/>
    <property type="project" value="UniProtKB-UniRule"/>
</dbReference>
<dbReference type="GO" id="GO:0006360">
    <property type="term" value="P:transcription by RNA polymerase I"/>
    <property type="evidence" value="ECO:0007669"/>
    <property type="project" value="TreeGrafter"/>
</dbReference>
<dbReference type="GO" id="GO:0006366">
    <property type="term" value="P:transcription by RNA polymerase II"/>
    <property type="evidence" value="ECO:0007669"/>
    <property type="project" value="TreeGrafter"/>
</dbReference>
<dbReference type="GO" id="GO:0042797">
    <property type="term" value="P:tRNA transcription by RNA polymerase III"/>
    <property type="evidence" value="ECO:0007669"/>
    <property type="project" value="TreeGrafter"/>
</dbReference>
<dbReference type="Gene3D" id="3.90.940.10">
    <property type="match status" value="1"/>
</dbReference>
<dbReference type="HAMAP" id="MF_00192">
    <property type="entry name" value="RNApol_arch_Rpo6"/>
    <property type="match status" value="1"/>
</dbReference>
<dbReference type="InterPro" id="IPR020708">
    <property type="entry name" value="DNA-dir_RNA_polK_14-18kDa_CS"/>
</dbReference>
<dbReference type="InterPro" id="IPR006110">
    <property type="entry name" value="Pol_omega/Rpo6/RPB6"/>
</dbReference>
<dbReference type="InterPro" id="IPR036161">
    <property type="entry name" value="RPB6/omega-like_sf"/>
</dbReference>
<dbReference type="InterPro" id="IPR006111">
    <property type="entry name" value="Rpo6/Rpb6"/>
</dbReference>
<dbReference type="NCBIfam" id="NF002208">
    <property type="entry name" value="PRK01099.1-3"/>
    <property type="match status" value="1"/>
</dbReference>
<dbReference type="PANTHER" id="PTHR47227">
    <property type="entry name" value="DNA-DIRECTED RNA POLYMERASE SUBUNIT K"/>
    <property type="match status" value="1"/>
</dbReference>
<dbReference type="PANTHER" id="PTHR47227:SF5">
    <property type="entry name" value="DNA-DIRECTED RNA POLYMERASES I, II, AND III SUBUNIT RPABC2"/>
    <property type="match status" value="1"/>
</dbReference>
<dbReference type="Pfam" id="PF01192">
    <property type="entry name" value="RNA_pol_Rpb6"/>
    <property type="match status" value="1"/>
</dbReference>
<dbReference type="PIRSF" id="PIRSF000778">
    <property type="entry name" value="RpoK/RPB6"/>
    <property type="match status" value="1"/>
</dbReference>
<dbReference type="SMART" id="SM01409">
    <property type="entry name" value="RNA_pol_Rpb6"/>
    <property type="match status" value="1"/>
</dbReference>
<dbReference type="SUPFAM" id="SSF63562">
    <property type="entry name" value="RPB6/omega subunit-like"/>
    <property type="match status" value="1"/>
</dbReference>
<dbReference type="PROSITE" id="PS01111">
    <property type="entry name" value="RNA_POL_K_14KD"/>
    <property type="match status" value="1"/>
</dbReference>
<gene>
    <name evidence="1" type="primary">rpo6</name>
    <name evidence="1" type="synonym">rpoK</name>
    <name type="ordered locus">MTH_42</name>
</gene>
<organism>
    <name type="scientific">Methanothermobacter thermautotrophicus (strain ATCC 29096 / DSM 1053 / JCM 10044 / NBRC 100330 / Delta H)</name>
    <name type="common">Methanobacterium thermoautotrophicum</name>
    <dbReference type="NCBI Taxonomy" id="187420"/>
    <lineage>
        <taxon>Archaea</taxon>
        <taxon>Methanobacteriati</taxon>
        <taxon>Methanobacteriota</taxon>
        <taxon>Methanomada group</taxon>
        <taxon>Methanobacteria</taxon>
        <taxon>Methanobacteriales</taxon>
        <taxon>Methanobacteriaceae</taxon>
        <taxon>Methanothermobacter</taxon>
    </lineage>
</organism>
<keyword id="KW-0963">Cytoplasm</keyword>
<keyword id="KW-0240">DNA-directed RNA polymerase</keyword>
<keyword id="KW-0548">Nucleotidyltransferase</keyword>
<keyword id="KW-1185">Reference proteome</keyword>
<keyword id="KW-0804">Transcription</keyword>
<keyword id="KW-0808">Transferase</keyword>
<feature type="chain" id="PRO_0000133815" description="DNA-directed RNA polymerase subunit Rpo6">
    <location>
        <begin position="1"/>
        <end position="61"/>
    </location>
</feature>
<sequence>MHMASKKLTRFERARLIGARALQISMGARPLVEIKESLDPVDIARKELEKKVMPLDVRRDK</sequence>
<reference key="1">
    <citation type="journal article" date="1997" name="J. Bacteriol.">
        <title>Complete genome sequence of Methanobacterium thermoautotrophicum deltaH: functional analysis and comparative genomics.</title>
        <authorList>
            <person name="Smith D.R."/>
            <person name="Doucette-Stamm L.A."/>
            <person name="Deloughery C."/>
            <person name="Lee H.-M."/>
            <person name="Dubois J."/>
            <person name="Aldredge T."/>
            <person name="Bashirzadeh R."/>
            <person name="Blakely D."/>
            <person name="Cook R."/>
            <person name="Gilbert K."/>
            <person name="Harrison D."/>
            <person name="Hoang L."/>
            <person name="Keagle P."/>
            <person name="Lumm W."/>
            <person name="Pothier B."/>
            <person name="Qiu D."/>
            <person name="Spadafora R."/>
            <person name="Vicare R."/>
            <person name="Wang Y."/>
            <person name="Wierzbowski J."/>
            <person name="Gibson R."/>
            <person name="Jiwani N."/>
            <person name="Caruso A."/>
            <person name="Bush D."/>
            <person name="Safer H."/>
            <person name="Patwell D."/>
            <person name="Prabhakar S."/>
            <person name="McDougall S."/>
            <person name="Shimer G."/>
            <person name="Goyal A."/>
            <person name="Pietrovski S."/>
            <person name="Church G.M."/>
            <person name="Daniels C.J."/>
            <person name="Mao J.-I."/>
            <person name="Rice P."/>
            <person name="Noelling J."/>
            <person name="Reeve J.N."/>
        </authorList>
    </citation>
    <scope>NUCLEOTIDE SEQUENCE [LARGE SCALE GENOMIC DNA]</scope>
    <source>
        <strain>ATCC 29096 / DSM 1053 / JCM 10044 / NBRC 100330 / Delta H</strain>
    </source>
</reference>
<protein>
    <recommendedName>
        <fullName evidence="1">DNA-directed RNA polymerase subunit Rpo6</fullName>
        <ecNumber evidence="1">2.7.7.6</ecNumber>
    </recommendedName>
    <alternativeName>
        <fullName evidence="1 2">DNA-directed RNA polymerase subunit K</fullName>
    </alternativeName>
</protein>